<reference key="1">
    <citation type="journal article" date="2002" name="J. Bacteriol.">
        <title>Whole-genome comparison of Mycobacterium tuberculosis clinical and laboratory strains.</title>
        <authorList>
            <person name="Fleischmann R.D."/>
            <person name="Alland D."/>
            <person name="Eisen J.A."/>
            <person name="Carpenter L."/>
            <person name="White O."/>
            <person name="Peterson J.D."/>
            <person name="DeBoy R.T."/>
            <person name="Dodson R.J."/>
            <person name="Gwinn M.L."/>
            <person name="Haft D.H."/>
            <person name="Hickey E.K."/>
            <person name="Kolonay J.F."/>
            <person name="Nelson W.C."/>
            <person name="Umayam L.A."/>
            <person name="Ermolaeva M.D."/>
            <person name="Salzberg S.L."/>
            <person name="Delcher A."/>
            <person name="Utterback T.R."/>
            <person name="Weidman J.F."/>
            <person name="Khouri H.M."/>
            <person name="Gill J."/>
            <person name="Mikula A."/>
            <person name="Bishai W."/>
            <person name="Jacobs W.R. Jr."/>
            <person name="Venter J.C."/>
            <person name="Fraser C.M."/>
        </authorList>
    </citation>
    <scope>NUCLEOTIDE SEQUENCE [LARGE SCALE GENOMIC DNA]</scope>
    <source>
        <strain>CDC 1551 / Oshkosh</strain>
    </source>
</reference>
<comment type="function">
    <text evidence="1">Cyclic nucleotide phosphodiesterase with a dual-specificity for the second messengers cAMP and cGMP.</text>
</comment>
<comment type="catalytic activity">
    <reaction evidence="1">
        <text>a nucleoside 2',3'-cyclic phosphate + H2O = a nucleoside 3'-phosphate + H(+)</text>
        <dbReference type="Rhea" id="RHEA:19621"/>
        <dbReference type="ChEBI" id="CHEBI:15377"/>
        <dbReference type="ChEBI" id="CHEBI:15378"/>
        <dbReference type="ChEBI" id="CHEBI:66949"/>
        <dbReference type="ChEBI" id="CHEBI:66954"/>
        <dbReference type="EC" id="3.1.4.16"/>
    </reaction>
</comment>
<comment type="catalytic activity">
    <reaction evidence="1">
        <text>2',3'-cyclophospho-AMP + H2O = 3'-AMP + H(+)</text>
        <dbReference type="Rhea" id="RHEA:27886"/>
        <dbReference type="ChEBI" id="CHEBI:15377"/>
        <dbReference type="ChEBI" id="CHEBI:15378"/>
        <dbReference type="ChEBI" id="CHEBI:60879"/>
        <dbReference type="ChEBI" id="CHEBI:60880"/>
        <dbReference type="EC" id="3.1.4.16"/>
    </reaction>
</comment>
<comment type="catalytic activity">
    <reaction evidence="1">
        <text>2',3'-cyclophospho-GMP + H2O = 3'-GMP + H(+)</text>
        <dbReference type="Rhea" id="RHEA:27858"/>
        <dbReference type="ChEBI" id="CHEBI:15377"/>
        <dbReference type="ChEBI" id="CHEBI:15378"/>
        <dbReference type="ChEBI" id="CHEBI:60732"/>
        <dbReference type="ChEBI" id="CHEBI:60837"/>
        <dbReference type="EC" id="3.1.4.16"/>
    </reaction>
</comment>
<comment type="catalytic activity">
    <reaction evidence="1">
        <text>a nucleoside 3',5'-cyclic phosphate + H2O = a nucleoside 5'-phosphate + H(+)</text>
        <dbReference type="Rhea" id="RHEA:14653"/>
        <dbReference type="ChEBI" id="CHEBI:15377"/>
        <dbReference type="ChEBI" id="CHEBI:15378"/>
        <dbReference type="ChEBI" id="CHEBI:57867"/>
        <dbReference type="ChEBI" id="CHEBI:58464"/>
        <dbReference type="EC" id="3.1.4.17"/>
    </reaction>
</comment>
<comment type="catalytic activity">
    <reaction evidence="1">
        <text>3',5'-cyclic AMP + H2O = AMP + H(+)</text>
        <dbReference type="Rhea" id="RHEA:25277"/>
        <dbReference type="ChEBI" id="CHEBI:15377"/>
        <dbReference type="ChEBI" id="CHEBI:15378"/>
        <dbReference type="ChEBI" id="CHEBI:58165"/>
        <dbReference type="ChEBI" id="CHEBI:456215"/>
    </reaction>
</comment>
<comment type="catalytic activity">
    <reaction evidence="1">
        <text>3',5'-cyclic GMP + H2O = GMP + H(+)</text>
        <dbReference type="Rhea" id="RHEA:16957"/>
        <dbReference type="ChEBI" id="CHEBI:15377"/>
        <dbReference type="ChEBI" id="CHEBI:15378"/>
        <dbReference type="ChEBI" id="CHEBI:57746"/>
        <dbReference type="ChEBI" id="CHEBI:58115"/>
    </reaction>
</comment>
<comment type="cofactor">
    <cofactor evidence="1">
        <name>Fe(3+)</name>
        <dbReference type="ChEBI" id="CHEBI:29034"/>
    </cofactor>
    <text evidence="1">Binds 1 Fe(3+) ion per subunit.</text>
</comment>
<comment type="cofactor">
    <cofactor evidence="1">
        <name>Mn(2+)</name>
        <dbReference type="ChEBI" id="CHEBI:29035"/>
    </cofactor>
    <text evidence="1">Binds 1 Mn(2+) ion per subunit.</text>
</comment>
<comment type="subunit">
    <text evidence="1">Homodimer.</text>
</comment>
<comment type="subcellular location">
    <subcellularLocation>
        <location evidence="1">Cytoplasm</location>
    </subcellularLocation>
    <subcellularLocation>
        <location evidence="1">Cell membrane</location>
    </subcellularLocation>
    <subcellularLocation>
        <location evidence="1">Secreted</location>
        <location evidence="1">Cell wall</location>
    </subcellularLocation>
    <subcellularLocation>
        <location evidence="1">Cell envelope</location>
    </subcellularLocation>
    <text evidence="1">The C-terminal extension (CTE) is necessary for the localization to the cell wall and cell envelope.</text>
</comment>
<comment type="domain">
    <text evidence="1">The C-terminal extension (CTE) is used to better adjust the substrates into the active sites and mediates in vivo subcellular localization of the protein.</text>
</comment>
<comment type="similarity">
    <text evidence="2">Belongs to the cyclic nucleotide phosphodiesterase class-III family.</text>
</comment>
<protein>
    <recommendedName>
        <fullName evidence="1">cAMP/cGMP dual specificity phosphodiesterase MT0825</fullName>
        <ecNumber evidence="1">3.1.4.16</ecNumber>
        <ecNumber evidence="1">3.1.4.17</ecNumber>
    </recommendedName>
    <alternativeName>
        <fullName evidence="1">2',3'-cyclic-nucleotide phosphodiesterase</fullName>
    </alternativeName>
    <alternativeName>
        <fullName evidence="1">3',5'-cyclic-nucleotide phosphodiesterase</fullName>
    </alternativeName>
</protein>
<organism>
    <name type="scientific">Mycobacterium tuberculosis (strain CDC 1551 / Oshkosh)</name>
    <dbReference type="NCBI Taxonomy" id="83331"/>
    <lineage>
        <taxon>Bacteria</taxon>
        <taxon>Bacillati</taxon>
        <taxon>Actinomycetota</taxon>
        <taxon>Actinomycetes</taxon>
        <taxon>Mycobacteriales</taxon>
        <taxon>Mycobacteriaceae</taxon>
        <taxon>Mycobacterium</taxon>
        <taxon>Mycobacterium tuberculosis complex</taxon>
    </lineage>
</organism>
<proteinExistence type="inferred from homology"/>
<keyword id="KW-0114">cAMP</keyword>
<keyword id="KW-1003">Cell membrane</keyword>
<keyword id="KW-0134">Cell wall</keyword>
<keyword id="KW-0140">cGMP</keyword>
<keyword id="KW-0963">Cytoplasm</keyword>
<keyword id="KW-0378">Hydrolase</keyword>
<keyword id="KW-0408">Iron</keyword>
<keyword id="KW-0464">Manganese</keyword>
<keyword id="KW-0472">Membrane</keyword>
<keyword id="KW-0479">Metal-binding</keyword>
<keyword id="KW-0547">Nucleotide-binding</keyword>
<keyword id="KW-1185">Reference proteome</keyword>
<keyword id="KW-0964">Secreted</keyword>
<dbReference type="EC" id="3.1.4.16" evidence="1"/>
<dbReference type="EC" id="3.1.4.17" evidence="1"/>
<dbReference type="EMBL" id="AE000516">
    <property type="protein sequence ID" value="AAK45067.1"/>
    <property type="molecule type" value="Genomic_DNA"/>
</dbReference>
<dbReference type="PIR" id="F70536">
    <property type="entry name" value="F70536"/>
</dbReference>
<dbReference type="SMR" id="P9WP64"/>
<dbReference type="KEGG" id="mtc:MT0825"/>
<dbReference type="HOGENOM" id="CLU_070320_1_0_11"/>
<dbReference type="Proteomes" id="UP000001020">
    <property type="component" value="Chromosome"/>
</dbReference>
<dbReference type="GO" id="GO:0030313">
    <property type="term" value="C:cell envelope"/>
    <property type="evidence" value="ECO:0007669"/>
    <property type="project" value="UniProtKB-SubCell"/>
</dbReference>
<dbReference type="GO" id="GO:0005737">
    <property type="term" value="C:cytoplasm"/>
    <property type="evidence" value="ECO:0007669"/>
    <property type="project" value="UniProtKB-SubCell"/>
</dbReference>
<dbReference type="GO" id="GO:0005576">
    <property type="term" value="C:extracellular region"/>
    <property type="evidence" value="ECO:0007669"/>
    <property type="project" value="UniProtKB-KW"/>
</dbReference>
<dbReference type="GO" id="GO:0005886">
    <property type="term" value="C:plasma membrane"/>
    <property type="evidence" value="ECO:0007669"/>
    <property type="project" value="UniProtKB-SubCell"/>
</dbReference>
<dbReference type="GO" id="GO:0008663">
    <property type="term" value="F:2',3'-cyclic-nucleotide 2'-phosphodiesterase activity"/>
    <property type="evidence" value="ECO:0007669"/>
    <property type="project" value="RHEA"/>
</dbReference>
<dbReference type="GO" id="GO:0004115">
    <property type="term" value="F:3',5'-cyclic-AMP phosphodiesterase activity"/>
    <property type="evidence" value="ECO:0007669"/>
    <property type="project" value="UniProtKB-EC"/>
</dbReference>
<dbReference type="GO" id="GO:0047555">
    <property type="term" value="F:3',5'-cyclic-GMP phosphodiesterase activity"/>
    <property type="evidence" value="ECO:0007669"/>
    <property type="project" value="RHEA"/>
</dbReference>
<dbReference type="GO" id="GO:0046872">
    <property type="term" value="F:metal ion binding"/>
    <property type="evidence" value="ECO:0007669"/>
    <property type="project" value="UniProtKB-KW"/>
</dbReference>
<dbReference type="GO" id="GO:0000166">
    <property type="term" value="F:nucleotide binding"/>
    <property type="evidence" value="ECO:0007669"/>
    <property type="project" value="UniProtKB-KW"/>
</dbReference>
<dbReference type="CDD" id="cd07402">
    <property type="entry name" value="MPP_GpdQ"/>
    <property type="match status" value="1"/>
</dbReference>
<dbReference type="Gene3D" id="3.60.21.10">
    <property type="match status" value="1"/>
</dbReference>
<dbReference type="InterPro" id="IPR004843">
    <property type="entry name" value="Calcineurin-like_PHP_ApaH"/>
</dbReference>
<dbReference type="InterPro" id="IPR050884">
    <property type="entry name" value="CNP_phosphodiesterase-III"/>
</dbReference>
<dbReference type="InterPro" id="IPR026575">
    <property type="entry name" value="GpdQ/CpdA-like"/>
</dbReference>
<dbReference type="InterPro" id="IPR029052">
    <property type="entry name" value="Metallo-depent_PP-like"/>
</dbReference>
<dbReference type="PANTHER" id="PTHR42988:SF2">
    <property type="entry name" value="CYCLIC NUCLEOTIDE PHOSPHODIESTERASE CBUA0032-RELATED"/>
    <property type="match status" value="1"/>
</dbReference>
<dbReference type="PANTHER" id="PTHR42988">
    <property type="entry name" value="PHOSPHOHYDROLASE"/>
    <property type="match status" value="1"/>
</dbReference>
<dbReference type="Pfam" id="PF00149">
    <property type="entry name" value="Metallophos"/>
    <property type="match status" value="1"/>
</dbReference>
<dbReference type="SUPFAM" id="SSF56300">
    <property type="entry name" value="Metallo-dependent phosphatases"/>
    <property type="match status" value="1"/>
</dbReference>
<gene>
    <name evidence="3" type="primary">icc</name>
    <name evidence="3" type="ordered locus">MT0825</name>
</gene>
<evidence type="ECO:0000250" key="1">
    <source>
        <dbReference type="UniProtKB" id="P9WP65"/>
    </source>
</evidence>
<evidence type="ECO:0000305" key="2"/>
<evidence type="ECO:0000312" key="3">
    <source>
        <dbReference type="EMBL" id="AAK45067.1"/>
    </source>
</evidence>
<feature type="chain" id="PRO_0000427006" description="cAMP/cGMP dual specificity phosphodiesterase MT0825">
    <location>
        <begin position="1"/>
        <end position="318"/>
    </location>
</feature>
<feature type="region of interest" description="C-terminal extension" evidence="1">
    <location>
        <begin position="278"/>
        <end position="318"/>
    </location>
</feature>
<feature type="binding site" evidence="1">
    <location>
        <position position="21"/>
    </location>
    <ligand>
        <name>Fe cation</name>
        <dbReference type="ChEBI" id="CHEBI:24875"/>
    </ligand>
</feature>
<feature type="binding site" evidence="1">
    <location>
        <position position="23"/>
    </location>
    <ligand>
        <name>AMP</name>
        <dbReference type="ChEBI" id="CHEBI:456215"/>
    </ligand>
</feature>
<feature type="binding site" evidence="1">
    <location>
        <position position="23"/>
    </location>
    <ligand>
        <name>Fe cation</name>
        <dbReference type="ChEBI" id="CHEBI:24875"/>
    </ligand>
</feature>
<feature type="binding site" evidence="1">
    <location>
        <position position="63"/>
    </location>
    <ligand>
        <name>AMP</name>
        <dbReference type="ChEBI" id="CHEBI:456215"/>
    </ligand>
</feature>
<feature type="binding site" evidence="1">
    <location>
        <position position="63"/>
    </location>
    <ligand>
        <name>Fe cation</name>
        <dbReference type="ChEBI" id="CHEBI:24875"/>
    </ligand>
</feature>
<feature type="binding site" evidence="1">
    <location>
        <position position="63"/>
    </location>
    <ligand>
        <name>Mn(2+)</name>
        <dbReference type="ChEBI" id="CHEBI:29035"/>
    </ligand>
</feature>
<feature type="binding site" evidence="1">
    <location>
        <begin position="97"/>
        <end position="98"/>
    </location>
    <ligand>
        <name>AMP</name>
        <dbReference type="ChEBI" id="CHEBI:456215"/>
    </ligand>
</feature>
<feature type="binding site" evidence="1">
    <location>
        <position position="97"/>
    </location>
    <ligand>
        <name>Mn(2+)</name>
        <dbReference type="ChEBI" id="CHEBI:29035"/>
    </ligand>
</feature>
<feature type="binding site" evidence="1">
    <location>
        <position position="169"/>
    </location>
    <ligand>
        <name>Mn(2+)</name>
        <dbReference type="ChEBI" id="CHEBI:29035"/>
    </ligand>
</feature>
<feature type="binding site" evidence="1">
    <location>
        <position position="207"/>
    </location>
    <ligand>
        <name>Mn(2+)</name>
        <dbReference type="ChEBI" id="CHEBI:29035"/>
    </ligand>
</feature>
<feature type="binding site" evidence="1">
    <location>
        <position position="209"/>
    </location>
    <ligand>
        <name>AMP</name>
        <dbReference type="ChEBI" id="CHEBI:456215"/>
    </ligand>
</feature>
<feature type="binding site" evidence="1">
    <location>
        <position position="209"/>
    </location>
    <ligand>
        <name>Fe cation</name>
        <dbReference type="ChEBI" id="CHEBI:24875"/>
    </ligand>
</feature>
<name>CNPD3_MYCTO</name>
<sequence>MHRLRAAEHPRPDYVLLHISDTHLIGGDRRLYGAVDADDRLGELLEQLNQSGLRPDAIVFTGDLADKGEPAAYRKLRGLVEPFAAQLGAELVWVMGNHDDRAELRKFLLDEAPSMAPLDRVCMIDGLRIIVLDTSVPGHHHGEIRASQLGWLAEELATPAPDGTILALHHPPIPSVLDMAVTVELRDQAALGRVLRGTDVRAILAGHLHYSTNATFVGIPVSVASATCYTQDLTVAAGGTRGRDGAQGCNLVHVYPDTVVHSVIPLGGGETVGTFVSPGQARRKIAESGIFIEPSRRDSLFKHPPMVLTSSAPRSPVD</sequence>
<accession>P9WP64</accession>
<accession>L0T7J7</accession>
<accession>O06629</accession>
<accession>Q7D993</accession>